<dbReference type="EC" id="2.1.1.163" evidence="1"/>
<dbReference type="EC" id="2.1.1.201" evidence="1"/>
<dbReference type="EMBL" id="CP001600">
    <property type="protein sequence ID" value="ACR67395.1"/>
    <property type="molecule type" value="Genomic_DNA"/>
</dbReference>
<dbReference type="RefSeq" id="WP_015869611.1">
    <property type="nucleotide sequence ID" value="NZ_CP169062.1"/>
</dbReference>
<dbReference type="SMR" id="C5BCA4"/>
<dbReference type="STRING" id="67780.B6E78_11850"/>
<dbReference type="GeneID" id="69537247"/>
<dbReference type="KEGG" id="eic:NT01EI_0140"/>
<dbReference type="PATRIC" id="fig|634503.3.peg.131"/>
<dbReference type="HOGENOM" id="CLU_037990_0_0_6"/>
<dbReference type="OrthoDB" id="9808140at2"/>
<dbReference type="UniPathway" id="UPA00079">
    <property type="reaction ID" value="UER00169"/>
</dbReference>
<dbReference type="UniPathway" id="UPA00232"/>
<dbReference type="Proteomes" id="UP000001485">
    <property type="component" value="Chromosome"/>
</dbReference>
<dbReference type="GO" id="GO:0008425">
    <property type="term" value="F:2-methoxy-6-polyprenyl-1,4-benzoquinol methyltransferase activity"/>
    <property type="evidence" value="ECO:0007669"/>
    <property type="project" value="UniProtKB-UniRule"/>
</dbReference>
<dbReference type="GO" id="GO:0043770">
    <property type="term" value="F:demethylmenaquinone methyltransferase activity"/>
    <property type="evidence" value="ECO:0007669"/>
    <property type="project" value="UniProtKB-UniRule"/>
</dbReference>
<dbReference type="GO" id="GO:0009060">
    <property type="term" value="P:aerobic respiration"/>
    <property type="evidence" value="ECO:0007669"/>
    <property type="project" value="UniProtKB-UniRule"/>
</dbReference>
<dbReference type="GO" id="GO:0009234">
    <property type="term" value="P:menaquinone biosynthetic process"/>
    <property type="evidence" value="ECO:0007669"/>
    <property type="project" value="UniProtKB-UniRule"/>
</dbReference>
<dbReference type="GO" id="GO:0032259">
    <property type="term" value="P:methylation"/>
    <property type="evidence" value="ECO:0007669"/>
    <property type="project" value="UniProtKB-KW"/>
</dbReference>
<dbReference type="CDD" id="cd02440">
    <property type="entry name" value="AdoMet_MTases"/>
    <property type="match status" value="1"/>
</dbReference>
<dbReference type="FunFam" id="3.40.50.150:FF:000014">
    <property type="entry name" value="Ubiquinone/menaquinone biosynthesis C-methyltransferase UbiE"/>
    <property type="match status" value="1"/>
</dbReference>
<dbReference type="Gene3D" id="3.40.50.150">
    <property type="entry name" value="Vaccinia Virus protein VP39"/>
    <property type="match status" value="1"/>
</dbReference>
<dbReference type="HAMAP" id="MF_01813">
    <property type="entry name" value="MenG_UbiE_methyltr"/>
    <property type="match status" value="1"/>
</dbReference>
<dbReference type="InterPro" id="IPR029063">
    <property type="entry name" value="SAM-dependent_MTases_sf"/>
</dbReference>
<dbReference type="InterPro" id="IPR004033">
    <property type="entry name" value="UbiE/COQ5_MeTrFase"/>
</dbReference>
<dbReference type="InterPro" id="IPR023576">
    <property type="entry name" value="UbiE/COQ5_MeTrFase_CS"/>
</dbReference>
<dbReference type="NCBIfam" id="TIGR01934">
    <property type="entry name" value="MenG_MenH_UbiE"/>
    <property type="match status" value="1"/>
</dbReference>
<dbReference type="NCBIfam" id="NF001240">
    <property type="entry name" value="PRK00216.1-1"/>
    <property type="match status" value="1"/>
</dbReference>
<dbReference type="NCBIfam" id="NF001242">
    <property type="entry name" value="PRK00216.1-3"/>
    <property type="match status" value="1"/>
</dbReference>
<dbReference type="NCBIfam" id="NF001244">
    <property type="entry name" value="PRK00216.1-5"/>
    <property type="match status" value="1"/>
</dbReference>
<dbReference type="PANTHER" id="PTHR43591:SF24">
    <property type="entry name" value="2-METHOXY-6-POLYPRENYL-1,4-BENZOQUINOL METHYLASE, MITOCHONDRIAL"/>
    <property type="match status" value="1"/>
</dbReference>
<dbReference type="PANTHER" id="PTHR43591">
    <property type="entry name" value="METHYLTRANSFERASE"/>
    <property type="match status" value="1"/>
</dbReference>
<dbReference type="Pfam" id="PF01209">
    <property type="entry name" value="Ubie_methyltran"/>
    <property type="match status" value="1"/>
</dbReference>
<dbReference type="SUPFAM" id="SSF53335">
    <property type="entry name" value="S-adenosyl-L-methionine-dependent methyltransferases"/>
    <property type="match status" value="1"/>
</dbReference>
<dbReference type="PROSITE" id="PS51608">
    <property type="entry name" value="SAM_MT_UBIE"/>
    <property type="match status" value="1"/>
</dbReference>
<dbReference type="PROSITE" id="PS01183">
    <property type="entry name" value="UBIE_1"/>
    <property type="match status" value="1"/>
</dbReference>
<dbReference type="PROSITE" id="PS01184">
    <property type="entry name" value="UBIE_2"/>
    <property type="match status" value="1"/>
</dbReference>
<reference key="1">
    <citation type="submission" date="2009-03" db="EMBL/GenBank/DDBJ databases">
        <title>Complete genome sequence of Edwardsiella ictaluri 93-146.</title>
        <authorList>
            <person name="Williams M.L."/>
            <person name="Gillaspy A.F."/>
            <person name="Dyer D.W."/>
            <person name="Thune R.L."/>
            <person name="Waldbieser G.C."/>
            <person name="Schuster S.C."/>
            <person name="Gipson J."/>
            <person name="Zaitshik J."/>
            <person name="Landry C."/>
            <person name="Lawrence M.L."/>
        </authorList>
    </citation>
    <scope>NUCLEOTIDE SEQUENCE [LARGE SCALE GENOMIC DNA]</scope>
    <source>
        <strain>93-146</strain>
    </source>
</reference>
<accession>C5BCA4</accession>
<evidence type="ECO:0000255" key="1">
    <source>
        <dbReference type="HAMAP-Rule" id="MF_01813"/>
    </source>
</evidence>
<keyword id="KW-0474">Menaquinone biosynthesis</keyword>
<keyword id="KW-0489">Methyltransferase</keyword>
<keyword id="KW-0949">S-adenosyl-L-methionine</keyword>
<keyword id="KW-0808">Transferase</keyword>
<keyword id="KW-0831">Ubiquinone biosynthesis</keyword>
<comment type="function">
    <text evidence="1">Methyltransferase required for the conversion of demethylmenaquinol (DMKH2) to menaquinol (MKH2) and the conversion of 2-polyprenyl-6-methoxy-1,4-benzoquinol (DDMQH2) to 2-polyprenyl-3-methyl-6-methoxy-1,4-benzoquinol (DMQH2).</text>
</comment>
<comment type="catalytic activity">
    <reaction evidence="1">
        <text>a 2-demethylmenaquinol + S-adenosyl-L-methionine = a menaquinol + S-adenosyl-L-homocysteine + H(+)</text>
        <dbReference type="Rhea" id="RHEA:42640"/>
        <dbReference type="Rhea" id="RHEA-COMP:9539"/>
        <dbReference type="Rhea" id="RHEA-COMP:9563"/>
        <dbReference type="ChEBI" id="CHEBI:15378"/>
        <dbReference type="ChEBI" id="CHEBI:18151"/>
        <dbReference type="ChEBI" id="CHEBI:55437"/>
        <dbReference type="ChEBI" id="CHEBI:57856"/>
        <dbReference type="ChEBI" id="CHEBI:59789"/>
        <dbReference type="EC" id="2.1.1.163"/>
    </reaction>
</comment>
<comment type="catalytic activity">
    <reaction evidence="1">
        <text>a 2-methoxy-6-(all-trans-polyprenyl)benzene-1,4-diol + S-adenosyl-L-methionine = a 5-methoxy-2-methyl-3-(all-trans-polyprenyl)benzene-1,4-diol + S-adenosyl-L-homocysteine + H(+)</text>
        <dbReference type="Rhea" id="RHEA:28286"/>
        <dbReference type="Rhea" id="RHEA-COMP:10858"/>
        <dbReference type="Rhea" id="RHEA-COMP:10859"/>
        <dbReference type="ChEBI" id="CHEBI:15378"/>
        <dbReference type="ChEBI" id="CHEBI:57856"/>
        <dbReference type="ChEBI" id="CHEBI:59789"/>
        <dbReference type="ChEBI" id="CHEBI:84166"/>
        <dbReference type="ChEBI" id="CHEBI:84167"/>
        <dbReference type="EC" id="2.1.1.201"/>
    </reaction>
</comment>
<comment type="pathway">
    <text evidence="1">Quinol/quinone metabolism; menaquinone biosynthesis; menaquinol from 1,4-dihydroxy-2-naphthoate: step 2/2.</text>
</comment>
<comment type="pathway">
    <text evidence="1">Cofactor biosynthesis; ubiquinone biosynthesis.</text>
</comment>
<comment type="similarity">
    <text evidence="1">Belongs to the class I-like SAM-binding methyltransferase superfamily. MenG/UbiE family.</text>
</comment>
<organism>
    <name type="scientific">Edwardsiella ictaluri (strain 93-146)</name>
    <dbReference type="NCBI Taxonomy" id="634503"/>
    <lineage>
        <taxon>Bacteria</taxon>
        <taxon>Pseudomonadati</taxon>
        <taxon>Pseudomonadota</taxon>
        <taxon>Gammaproteobacteria</taxon>
        <taxon>Enterobacterales</taxon>
        <taxon>Hafniaceae</taxon>
        <taxon>Edwardsiella</taxon>
    </lineage>
</organism>
<feature type="chain" id="PRO_1000215984" description="Ubiquinone/menaquinone biosynthesis C-methyltransferase UbiE">
    <location>
        <begin position="1"/>
        <end position="251"/>
    </location>
</feature>
<feature type="binding site" evidence="1">
    <location>
        <position position="74"/>
    </location>
    <ligand>
        <name>S-adenosyl-L-methionine</name>
        <dbReference type="ChEBI" id="CHEBI:59789"/>
    </ligand>
</feature>
<feature type="binding site" evidence="1">
    <location>
        <position position="95"/>
    </location>
    <ligand>
        <name>S-adenosyl-L-methionine</name>
        <dbReference type="ChEBI" id="CHEBI:59789"/>
    </ligand>
</feature>
<feature type="binding site" evidence="1">
    <location>
        <begin position="123"/>
        <end position="124"/>
    </location>
    <ligand>
        <name>S-adenosyl-L-methionine</name>
        <dbReference type="ChEBI" id="CHEBI:59789"/>
    </ligand>
</feature>
<proteinExistence type="inferred from homology"/>
<name>UBIE_EDWI9</name>
<gene>
    <name evidence="1" type="primary">ubiE</name>
    <name type="ordered locus">NT01EI_0140</name>
</gene>
<sequence>MVDQTPETTHFGYKTVAAADKAGKVAQVFHSVAGKYDLMNDLMSFGIHRLWKRFTIDCSGVRQGQRVLDLAGGTGDLAARFSRMVGEQGEVILADINDSMLKIGREKLRNMGIVGNLNYVQANAEALPFPENYFDCITIAFGLRNVTDKDKALRSMFRVLKPGGRLLVLEFSRPQFVALSKAYDAYSFHILPRIGEMVAHDGDSYRYLAESIRMHPDQETLKGMMAAAGFENTTYDNLTGGIVALHRGYKF</sequence>
<protein>
    <recommendedName>
        <fullName evidence="1">Ubiquinone/menaquinone biosynthesis C-methyltransferase UbiE</fullName>
        <ecNumber evidence="1">2.1.1.163</ecNumber>
        <ecNumber evidence="1">2.1.1.201</ecNumber>
    </recommendedName>
    <alternativeName>
        <fullName evidence="1">2-methoxy-6-polyprenyl-1,4-benzoquinol methylase</fullName>
    </alternativeName>
    <alternativeName>
        <fullName evidence="1">Demethylmenaquinone methyltransferase</fullName>
    </alternativeName>
</protein>